<proteinExistence type="inferred from homology"/>
<name>HSLV_ENTFA</name>
<comment type="function">
    <text evidence="1">Protease subunit of a proteasome-like degradation complex believed to be a general protein degrading machinery.</text>
</comment>
<comment type="catalytic activity">
    <reaction evidence="1">
        <text>ATP-dependent cleavage of peptide bonds with broad specificity.</text>
        <dbReference type="EC" id="3.4.25.2"/>
    </reaction>
</comment>
<comment type="activity regulation">
    <text evidence="1">Allosterically activated by HslU binding.</text>
</comment>
<comment type="subunit">
    <text evidence="1">A double ring-shaped homohexamer of HslV is capped on each side by a ring-shaped HslU homohexamer. The assembly of the HslU/HslV complex is dependent on binding of ATP.</text>
</comment>
<comment type="subcellular location">
    <subcellularLocation>
        <location evidence="1">Cytoplasm</location>
    </subcellularLocation>
</comment>
<comment type="similarity">
    <text evidence="1">Belongs to the peptidase T1B family. HslV subfamily.</text>
</comment>
<evidence type="ECO:0000255" key="1">
    <source>
        <dbReference type="HAMAP-Rule" id="MF_00248"/>
    </source>
</evidence>
<gene>
    <name evidence="1" type="primary">hslV</name>
    <name type="ordered locus">EF_1647</name>
</gene>
<accession>Q834K3</accession>
<sequence>MVESQFHSTTICAVEKDGKFAMAGDGQVTMGESVVMKGTAKKVRRIYNDEVVVGFAGSVADAFTLEEKFEGKLNEYNGNLTRAAVELAQEWRTQQSMQKLEAMLIVMNKEEMLLVSGTGEVITPDDGILAIGSGGNFALSAARAMKNFGDKEMPAKEIAKNALNIAADICVFTNHNIIVEEL</sequence>
<feature type="chain" id="PRO_0000148108" description="ATP-dependent protease subunit HslV">
    <location>
        <begin position="1"/>
        <end position="182"/>
    </location>
</feature>
<feature type="active site" evidence="1">
    <location>
        <position position="9"/>
    </location>
</feature>
<feature type="binding site" evidence="1">
    <location>
        <position position="167"/>
    </location>
    <ligand>
        <name>Na(+)</name>
        <dbReference type="ChEBI" id="CHEBI:29101"/>
    </ligand>
</feature>
<feature type="binding site" evidence="1">
    <location>
        <position position="170"/>
    </location>
    <ligand>
        <name>Na(+)</name>
        <dbReference type="ChEBI" id="CHEBI:29101"/>
    </ligand>
</feature>
<feature type="binding site" evidence="1">
    <location>
        <position position="173"/>
    </location>
    <ligand>
        <name>Na(+)</name>
        <dbReference type="ChEBI" id="CHEBI:29101"/>
    </ligand>
</feature>
<protein>
    <recommendedName>
        <fullName evidence="1">ATP-dependent protease subunit HslV</fullName>
        <ecNumber evidence="1">3.4.25.2</ecNumber>
    </recommendedName>
</protein>
<keyword id="KW-0021">Allosteric enzyme</keyword>
<keyword id="KW-0963">Cytoplasm</keyword>
<keyword id="KW-0378">Hydrolase</keyword>
<keyword id="KW-0479">Metal-binding</keyword>
<keyword id="KW-0645">Protease</keyword>
<keyword id="KW-1185">Reference proteome</keyword>
<keyword id="KW-0915">Sodium</keyword>
<keyword id="KW-0888">Threonine protease</keyword>
<organism>
    <name type="scientific">Enterococcus faecalis (strain ATCC 700802 / V583)</name>
    <dbReference type="NCBI Taxonomy" id="226185"/>
    <lineage>
        <taxon>Bacteria</taxon>
        <taxon>Bacillati</taxon>
        <taxon>Bacillota</taxon>
        <taxon>Bacilli</taxon>
        <taxon>Lactobacillales</taxon>
        <taxon>Enterococcaceae</taxon>
        <taxon>Enterococcus</taxon>
    </lineage>
</organism>
<reference key="1">
    <citation type="journal article" date="2003" name="Science">
        <title>Role of mobile DNA in the evolution of vancomycin-resistant Enterococcus faecalis.</title>
        <authorList>
            <person name="Paulsen I.T."/>
            <person name="Banerjei L."/>
            <person name="Myers G.S.A."/>
            <person name="Nelson K.E."/>
            <person name="Seshadri R."/>
            <person name="Read T.D."/>
            <person name="Fouts D.E."/>
            <person name="Eisen J.A."/>
            <person name="Gill S.R."/>
            <person name="Heidelberg J.F."/>
            <person name="Tettelin H."/>
            <person name="Dodson R.J."/>
            <person name="Umayam L.A."/>
            <person name="Brinkac L.M."/>
            <person name="Beanan M.J."/>
            <person name="Daugherty S.C."/>
            <person name="DeBoy R.T."/>
            <person name="Durkin S.A."/>
            <person name="Kolonay J.F."/>
            <person name="Madupu R."/>
            <person name="Nelson W.C."/>
            <person name="Vamathevan J.J."/>
            <person name="Tran B."/>
            <person name="Upton J."/>
            <person name="Hansen T."/>
            <person name="Shetty J."/>
            <person name="Khouri H.M."/>
            <person name="Utterback T.R."/>
            <person name="Radune D."/>
            <person name="Ketchum K.A."/>
            <person name="Dougherty B.A."/>
            <person name="Fraser C.M."/>
        </authorList>
    </citation>
    <scope>NUCLEOTIDE SEQUENCE [LARGE SCALE GENOMIC DNA]</scope>
    <source>
        <strain>ATCC 700802 / V583</strain>
    </source>
</reference>
<dbReference type="EC" id="3.4.25.2" evidence="1"/>
<dbReference type="EMBL" id="AE016830">
    <property type="protein sequence ID" value="AAO81425.1"/>
    <property type="molecule type" value="Genomic_DNA"/>
</dbReference>
<dbReference type="RefSeq" id="NP_815355.1">
    <property type="nucleotide sequence ID" value="NC_004668.1"/>
</dbReference>
<dbReference type="RefSeq" id="WP_002357489.1">
    <property type="nucleotide sequence ID" value="NZ_KE136528.1"/>
</dbReference>
<dbReference type="SMR" id="Q834K3"/>
<dbReference type="STRING" id="226185.EF_1647"/>
<dbReference type="MEROPS" id="T01.007"/>
<dbReference type="EnsemblBacteria" id="AAO81425">
    <property type="protein sequence ID" value="AAO81425"/>
    <property type="gene ID" value="EF_1647"/>
</dbReference>
<dbReference type="GeneID" id="60893945"/>
<dbReference type="KEGG" id="efa:EF1647"/>
<dbReference type="PATRIC" id="fig|226185.45.peg.1864"/>
<dbReference type="eggNOG" id="COG5405">
    <property type="taxonomic scope" value="Bacteria"/>
</dbReference>
<dbReference type="HOGENOM" id="CLU_093872_1_1_9"/>
<dbReference type="Proteomes" id="UP000001415">
    <property type="component" value="Chromosome"/>
</dbReference>
<dbReference type="GO" id="GO:0009376">
    <property type="term" value="C:HslUV protease complex"/>
    <property type="evidence" value="ECO:0007669"/>
    <property type="project" value="UniProtKB-UniRule"/>
</dbReference>
<dbReference type="GO" id="GO:0005839">
    <property type="term" value="C:proteasome core complex"/>
    <property type="evidence" value="ECO:0007669"/>
    <property type="project" value="InterPro"/>
</dbReference>
<dbReference type="GO" id="GO:0046872">
    <property type="term" value="F:metal ion binding"/>
    <property type="evidence" value="ECO:0007669"/>
    <property type="project" value="UniProtKB-KW"/>
</dbReference>
<dbReference type="GO" id="GO:0004298">
    <property type="term" value="F:threonine-type endopeptidase activity"/>
    <property type="evidence" value="ECO:0007669"/>
    <property type="project" value="UniProtKB-KW"/>
</dbReference>
<dbReference type="GO" id="GO:0051603">
    <property type="term" value="P:proteolysis involved in protein catabolic process"/>
    <property type="evidence" value="ECO:0007669"/>
    <property type="project" value="InterPro"/>
</dbReference>
<dbReference type="CDD" id="cd01913">
    <property type="entry name" value="protease_HslV"/>
    <property type="match status" value="1"/>
</dbReference>
<dbReference type="Gene3D" id="3.60.20.10">
    <property type="entry name" value="Glutamine Phosphoribosylpyrophosphate, subunit 1, domain 1"/>
    <property type="match status" value="1"/>
</dbReference>
<dbReference type="HAMAP" id="MF_00248">
    <property type="entry name" value="HslV"/>
    <property type="match status" value="1"/>
</dbReference>
<dbReference type="InterPro" id="IPR022281">
    <property type="entry name" value="ATP-dep_Prtase_HsIV_su"/>
</dbReference>
<dbReference type="InterPro" id="IPR029055">
    <property type="entry name" value="Ntn_hydrolases_N"/>
</dbReference>
<dbReference type="InterPro" id="IPR001353">
    <property type="entry name" value="Proteasome_sua/b"/>
</dbReference>
<dbReference type="InterPro" id="IPR023333">
    <property type="entry name" value="Proteasome_suB-type"/>
</dbReference>
<dbReference type="NCBIfam" id="TIGR03692">
    <property type="entry name" value="ATP_dep_HslV"/>
    <property type="match status" value="1"/>
</dbReference>
<dbReference type="NCBIfam" id="NF003964">
    <property type="entry name" value="PRK05456.1"/>
    <property type="match status" value="1"/>
</dbReference>
<dbReference type="PANTHER" id="PTHR32194:SF0">
    <property type="entry name" value="ATP-DEPENDENT PROTEASE SUBUNIT HSLV"/>
    <property type="match status" value="1"/>
</dbReference>
<dbReference type="PANTHER" id="PTHR32194">
    <property type="entry name" value="METALLOPROTEASE TLDD"/>
    <property type="match status" value="1"/>
</dbReference>
<dbReference type="Pfam" id="PF00227">
    <property type="entry name" value="Proteasome"/>
    <property type="match status" value="1"/>
</dbReference>
<dbReference type="PIRSF" id="PIRSF039093">
    <property type="entry name" value="HslV"/>
    <property type="match status" value="1"/>
</dbReference>
<dbReference type="SUPFAM" id="SSF56235">
    <property type="entry name" value="N-terminal nucleophile aminohydrolases (Ntn hydrolases)"/>
    <property type="match status" value="1"/>
</dbReference>
<dbReference type="PROSITE" id="PS51476">
    <property type="entry name" value="PROTEASOME_BETA_2"/>
    <property type="match status" value="1"/>
</dbReference>